<dbReference type="EC" id="4.2.3.5" evidence="1"/>
<dbReference type="EMBL" id="CP000768">
    <property type="protein sequence ID" value="ABS44823.1"/>
    <property type="molecule type" value="Genomic_DNA"/>
</dbReference>
<dbReference type="SMR" id="A7H5Y1"/>
<dbReference type="KEGG" id="cjd:JJD26997_1994"/>
<dbReference type="HOGENOM" id="CLU_034547_0_2_7"/>
<dbReference type="UniPathway" id="UPA00053">
    <property type="reaction ID" value="UER00090"/>
</dbReference>
<dbReference type="Proteomes" id="UP000002302">
    <property type="component" value="Chromosome"/>
</dbReference>
<dbReference type="GO" id="GO:0005829">
    <property type="term" value="C:cytosol"/>
    <property type="evidence" value="ECO:0007669"/>
    <property type="project" value="TreeGrafter"/>
</dbReference>
<dbReference type="GO" id="GO:0004107">
    <property type="term" value="F:chorismate synthase activity"/>
    <property type="evidence" value="ECO:0007669"/>
    <property type="project" value="UniProtKB-UniRule"/>
</dbReference>
<dbReference type="GO" id="GO:0010181">
    <property type="term" value="F:FMN binding"/>
    <property type="evidence" value="ECO:0007669"/>
    <property type="project" value="TreeGrafter"/>
</dbReference>
<dbReference type="GO" id="GO:0008652">
    <property type="term" value="P:amino acid biosynthetic process"/>
    <property type="evidence" value="ECO:0007669"/>
    <property type="project" value="UniProtKB-KW"/>
</dbReference>
<dbReference type="GO" id="GO:0009073">
    <property type="term" value="P:aromatic amino acid family biosynthetic process"/>
    <property type="evidence" value="ECO:0007669"/>
    <property type="project" value="UniProtKB-KW"/>
</dbReference>
<dbReference type="GO" id="GO:0009423">
    <property type="term" value="P:chorismate biosynthetic process"/>
    <property type="evidence" value="ECO:0007669"/>
    <property type="project" value="UniProtKB-UniRule"/>
</dbReference>
<dbReference type="CDD" id="cd07304">
    <property type="entry name" value="Chorismate_synthase"/>
    <property type="match status" value="1"/>
</dbReference>
<dbReference type="Gene3D" id="3.60.150.10">
    <property type="entry name" value="Chorismate synthase AroC"/>
    <property type="match status" value="1"/>
</dbReference>
<dbReference type="HAMAP" id="MF_00300">
    <property type="entry name" value="Chorismate_synth"/>
    <property type="match status" value="1"/>
</dbReference>
<dbReference type="InterPro" id="IPR000453">
    <property type="entry name" value="Chorismate_synth"/>
</dbReference>
<dbReference type="InterPro" id="IPR035904">
    <property type="entry name" value="Chorismate_synth_AroC_sf"/>
</dbReference>
<dbReference type="InterPro" id="IPR020541">
    <property type="entry name" value="Chorismate_synthase_CS"/>
</dbReference>
<dbReference type="NCBIfam" id="TIGR00033">
    <property type="entry name" value="aroC"/>
    <property type="match status" value="1"/>
</dbReference>
<dbReference type="NCBIfam" id="NF003793">
    <property type="entry name" value="PRK05382.1"/>
    <property type="match status" value="1"/>
</dbReference>
<dbReference type="PANTHER" id="PTHR21085">
    <property type="entry name" value="CHORISMATE SYNTHASE"/>
    <property type="match status" value="1"/>
</dbReference>
<dbReference type="PANTHER" id="PTHR21085:SF0">
    <property type="entry name" value="CHORISMATE SYNTHASE"/>
    <property type="match status" value="1"/>
</dbReference>
<dbReference type="Pfam" id="PF01264">
    <property type="entry name" value="Chorismate_synt"/>
    <property type="match status" value="1"/>
</dbReference>
<dbReference type="PIRSF" id="PIRSF001456">
    <property type="entry name" value="Chorismate_synth"/>
    <property type="match status" value="1"/>
</dbReference>
<dbReference type="SUPFAM" id="SSF103263">
    <property type="entry name" value="Chorismate synthase, AroC"/>
    <property type="match status" value="1"/>
</dbReference>
<dbReference type="PROSITE" id="PS00787">
    <property type="entry name" value="CHORISMATE_SYNTHASE_1"/>
    <property type="match status" value="1"/>
</dbReference>
<dbReference type="PROSITE" id="PS00788">
    <property type="entry name" value="CHORISMATE_SYNTHASE_2"/>
    <property type="match status" value="1"/>
</dbReference>
<protein>
    <recommendedName>
        <fullName evidence="1">Chorismate synthase</fullName>
        <shortName evidence="1">CS</shortName>
        <ecNumber evidence="1">4.2.3.5</ecNumber>
    </recommendedName>
    <alternativeName>
        <fullName evidence="1">5-enolpyruvylshikimate-3-phosphate phospholyase</fullName>
    </alternativeName>
</protein>
<evidence type="ECO:0000255" key="1">
    <source>
        <dbReference type="HAMAP-Rule" id="MF_00300"/>
    </source>
</evidence>
<gene>
    <name evidence="1" type="primary">aroC</name>
    <name type="ordered locus">JJD26997_1994</name>
</gene>
<organism>
    <name type="scientific">Campylobacter jejuni subsp. doylei (strain ATCC BAA-1458 / RM4099 / 269.97)</name>
    <dbReference type="NCBI Taxonomy" id="360109"/>
    <lineage>
        <taxon>Bacteria</taxon>
        <taxon>Pseudomonadati</taxon>
        <taxon>Campylobacterota</taxon>
        <taxon>Epsilonproteobacteria</taxon>
        <taxon>Campylobacterales</taxon>
        <taxon>Campylobacteraceae</taxon>
        <taxon>Campylobacter</taxon>
    </lineage>
</organism>
<comment type="function">
    <text evidence="1">Catalyzes the anti-1,4-elimination of the C-3 phosphate and the C-6 proR hydrogen from 5-enolpyruvylshikimate-3-phosphate (EPSP) to yield chorismate, which is the branch point compound that serves as the starting substrate for the three terminal pathways of aromatic amino acid biosynthesis. This reaction introduces a second double bond into the aromatic ring system.</text>
</comment>
<comment type="catalytic activity">
    <reaction evidence="1">
        <text>5-O-(1-carboxyvinyl)-3-phosphoshikimate = chorismate + phosphate</text>
        <dbReference type="Rhea" id="RHEA:21020"/>
        <dbReference type="ChEBI" id="CHEBI:29748"/>
        <dbReference type="ChEBI" id="CHEBI:43474"/>
        <dbReference type="ChEBI" id="CHEBI:57701"/>
        <dbReference type="EC" id="4.2.3.5"/>
    </reaction>
</comment>
<comment type="cofactor">
    <cofactor evidence="1">
        <name>FMNH2</name>
        <dbReference type="ChEBI" id="CHEBI:57618"/>
    </cofactor>
    <text evidence="1">Reduced FMN (FMNH(2)).</text>
</comment>
<comment type="pathway">
    <text evidence="1">Metabolic intermediate biosynthesis; chorismate biosynthesis; chorismate from D-erythrose 4-phosphate and phosphoenolpyruvate: step 7/7.</text>
</comment>
<comment type="subunit">
    <text evidence="1">Homotetramer.</text>
</comment>
<comment type="similarity">
    <text evidence="1">Belongs to the chorismate synthase family.</text>
</comment>
<keyword id="KW-0028">Amino-acid biosynthesis</keyword>
<keyword id="KW-0057">Aromatic amino acid biosynthesis</keyword>
<keyword id="KW-0274">FAD</keyword>
<keyword id="KW-0285">Flavoprotein</keyword>
<keyword id="KW-0288">FMN</keyword>
<keyword id="KW-0456">Lyase</keyword>
<keyword id="KW-0521">NADP</keyword>
<proteinExistence type="inferred from homology"/>
<accession>A7H5Y1</accession>
<reference key="1">
    <citation type="submission" date="2007-07" db="EMBL/GenBank/DDBJ databases">
        <title>Complete genome sequence of Campylobacter jejuni subsp doylei 269.97 isolated from human blood.</title>
        <authorList>
            <person name="Fouts D.E."/>
            <person name="Mongodin E.F."/>
            <person name="Puiu D."/>
            <person name="Sebastian Y."/>
            <person name="Miller W.G."/>
            <person name="Mandrell R.E."/>
            <person name="Lastovica A.J."/>
            <person name="Nelson K.E."/>
        </authorList>
    </citation>
    <scope>NUCLEOTIDE SEQUENCE [LARGE SCALE GENOMIC DNA]</scope>
    <source>
        <strain>ATCC BAA-1458 / RM4099 / 269.97</strain>
    </source>
</reference>
<name>AROC_CAMJD</name>
<feature type="chain" id="PRO_1000022474" description="Chorismate synthase">
    <location>
        <begin position="1"/>
        <end position="362"/>
    </location>
</feature>
<feature type="binding site" evidence="1">
    <location>
        <position position="46"/>
    </location>
    <ligand>
        <name>NADP(+)</name>
        <dbReference type="ChEBI" id="CHEBI:58349"/>
    </ligand>
</feature>
<feature type="binding site" evidence="1">
    <location>
        <begin position="122"/>
        <end position="124"/>
    </location>
    <ligand>
        <name>FMN</name>
        <dbReference type="ChEBI" id="CHEBI:58210"/>
    </ligand>
</feature>
<feature type="binding site" evidence="1">
    <location>
        <begin position="238"/>
        <end position="239"/>
    </location>
    <ligand>
        <name>FMN</name>
        <dbReference type="ChEBI" id="CHEBI:58210"/>
    </ligand>
</feature>
<feature type="binding site" evidence="1">
    <location>
        <position position="278"/>
    </location>
    <ligand>
        <name>FMN</name>
        <dbReference type="ChEBI" id="CHEBI:58210"/>
    </ligand>
</feature>
<feature type="binding site" evidence="1">
    <location>
        <begin position="293"/>
        <end position="297"/>
    </location>
    <ligand>
        <name>FMN</name>
        <dbReference type="ChEBI" id="CHEBI:58210"/>
    </ligand>
</feature>
<feature type="binding site" evidence="1">
    <location>
        <position position="319"/>
    </location>
    <ligand>
        <name>FMN</name>
        <dbReference type="ChEBI" id="CHEBI:58210"/>
    </ligand>
</feature>
<sequence length="362" mass="39237">MNIFGTRLKFTSFGESHGVAVGCIIDGMPAGVKFDEEFLQNELDKRKGGSKFATPRKESDKAQVLSGVFEGYTTGHPIAIVVFNENAHSKDYDNLKDLFRPAHADFTYFYKYAIRDHRGGGRSSARESVARVAGGAVAAMLLREFGICVQSGVFGVGTFVSNLKEEEFDFEFAKKSEIFCLDPKLESDFKNEILNARNSKDSVGAAVFTKVSGMLVGLGEVLYDKLDSKLAHALMGINAVKAVEIGEGINASKMRGSCNNDALKDGKFLSNHSGGILGGISNGENLILKTYFKPTPSIFAKQESIDKFGNNLEFELKGRHDPCVGVRGSVVASAMVRLVLADCLLLNTSANLNNLKNAYGLK</sequence>